<evidence type="ECO:0000250" key="1"/>
<evidence type="ECO:0000250" key="2">
    <source>
        <dbReference type="UniProtKB" id="Q9WUX5"/>
    </source>
</evidence>
<evidence type="ECO:0000255" key="3"/>
<evidence type="ECO:0000256" key="4">
    <source>
        <dbReference type="SAM" id="MobiDB-lite"/>
    </source>
</evidence>
<evidence type="ECO:0000269" key="5">
    <source>
    </source>
</evidence>
<evidence type="ECO:0000269" key="6">
    <source>
    </source>
</evidence>
<evidence type="ECO:0000269" key="7">
    <source>
    </source>
</evidence>
<evidence type="ECO:0000269" key="8">
    <source>
    </source>
</evidence>
<evidence type="ECO:0000303" key="9">
    <source>
    </source>
</evidence>
<evidence type="ECO:0000305" key="10"/>
<dbReference type="EMBL" id="AF195526">
    <property type="protein sequence ID" value="AAF61202.1"/>
    <property type="molecule type" value="mRNA"/>
</dbReference>
<dbReference type="EMBL" id="AF195527">
    <property type="protein sequence ID" value="AAF61203.1"/>
    <property type="molecule type" value="mRNA"/>
</dbReference>
<dbReference type="SMR" id="Q9N1F0"/>
<dbReference type="CORUM" id="Q9N1F0"/>
<dbReference type="FunCoup" id="Q9N1F0">
    <property type="interactions" value="265"/>
</dbReference>
<dbReference type="IntAct" id="Q9N1F0">
    <property type="interactions" value="1"/>
</dbReference>
<dbReference type="STRING" id="9913.ENSBTAP00000043465"/>
<dbReference type="iPTMnet" id="Q9N1F0"/>
<dbReference type="PaxDb" id="9913-ENSBTAP00000043465"/>
<dbReference type="eggNOG" id="ENOG502QWGQ">
    <property type="taxonomic scope" value="Eukaryota"/>
</dbReference>
<dbReference type="InParanoid" id="Q9N1F0"/>
<dbReference type="Proteomes" id="UP000009136">
    <property type="component" value="Unplaced"/>
</dbReference>
<dbReference type="GO" id="GO:0016020">
    <property type="term" value="C:membrane"/>
    <property type="evidence" value="ECO:0007669"/>
    <property type="project" value="UniProtKB-SubCell"/>
</dbReference>
<dbReference type="GO" id="GO:0048471">
    <property type="term" value="C:perinuclear region of cytoplasm"/>
    <property type="evidence" value="ECO:0007669"/>
    <property type="project" value="UniProtKB-SubCell"/>
</dbReference>
<dbReference type="GO" id="GO:0016529">
    <property type="term" value="C:sarcoplasmic reticulum"/>
    <property type="evidence" value="ECO:0007669"/>
    <property type="project" value="UniProtKB-SubCell"/>
</dbReference>
<dbReference type="GO" id="GO:0019934">
    <property type="term" value="P:cGMP-mediated signaling"/>
    <property type="evidence" value="ECO:0000318"/>
    <property type="project" value="GO_Central"/>
</dbReference>
<dbReference type="InterPro" id="IPR008677">
    <property type="entry name" value="MRVI1"/>
</dbReference>
<dbReference type="PANTHER" id="PTHR15352:SF2">
    <property type="entry name" value="INOSITOL 1,4,5-TRIPHOSPHATE RECEPTOR ASSOCIATED 1"/>
    <property type="match status" value="1"/>
</dbReference>
<dbReference type="PANTHER" id="PTHR15352">
    <property type="entry name" value="LYMPHOID-RESTRICTED MEMBRANE PROTEIN, JAW1"/>
    <property type="match status" value="1"/>
</dbReference>
<dbReference type="Pfam" id="PF05781">
    <property type="entry name" value="MRVI1"/>
    <property type="match status" value="1"/>
</dbReference>
<feature type="chain" id="PRO_0000305291" description="Inositol 1,4,5-triphosphate receptor associated 1">
    <location>
        <begin position="1"/>
        <end position="911"/>
    </location>
</feature>
<feature type="transmembrane region" description="Helical" evidence="3">
    <location>
        <begin position="853"/>
        <end position="873"/>
    </location>
</feature>
<feature type="region of interest" description="Disordered" evidence="4">
    <location>
        <begin position="1"/>
        <end position="21"/>
    </location>
</feature>
<feature type="region of interest" description="Disordered" evidence="4">
    <location>
        <begin position="39"/>
        <end position="122"/>
    </location>
</feature>
<feature type="region of interest" description="Interaction with PRKG1">
    <location>
        <begin position="152"/>
        <end position="184"/>
    </location>
</feature>
<feature type="region of interest" description="Disordered" evidence="4">
    <location>
        <begin position="174"/>
        <end position="405"/>
    </location>
</feature>
<feature type="region of interest" description="Disordered" evidence="4">
    <location>
        <begin position="478"/>
        <end position="498"/>
    </location>
</feature>
<feature type="region of interest" description="Interaction with ITPR1" evidence="1">
    <location>
        <begin position="534"/>
        <end position="580"/>
    </location>
</feature>
<feature type="region of interest" description="Disordered" evidence="4">
    <location>
        <begin position="706"/>
        <end position="766"/>
    </location>
</feature>
<feature type="region of interest" description="Disordered" evidence="4">
    <location>
        <begin position="787"/>
        <end position="829"/>
    </location>
</feature>
<feature type="coiled-coil region" evidence="3">
    <location>
        <begin position="547"/>
        <end position="645"/>
    </location>
</feature>
<feature type="compositionally biased region" description="Basic and acidic residues" evidence="4">
    <location>
        <begin position="1"/>
        <end position="11"/>
    </location>
</feature>
<feature type="compositionally biased region" description="Polar residues" evidence="4">
    <location>
        <begin position="68"/>
        <end position="86"/>
    </location>
</feature>
<feature type="compositionally biased region" description="Basic residues" evidence="4">
    <location>
        <begin position="111"/>
        <end position="122"/>
    </location>
</feature>
<feature type="compositionally biased region" description="Polar residues" evidence="4">
    <location>
        <begin position="183"/>
        <end position="212"/>
    </location>
</feature>
<feature type="compositionally biased region" description="Basic and acidic residues" evidence="4">
    <location>
        <begin position="277"/>
        <end position="292"/>
    </location>
</feature>
<feature type="compositionally biased region" description="Low complexity" evidence="4">
    <location>
        <begin position="708"/>
        <end position="728"/>
    </location>
</feature>
<feature type="compositionally biased region" description="Basic and acidic residues" evidence="4">
    <location>
        <begin position="790"/>
        <end position="801"/>
    </location>
</feature>
<feature type="compositionally biased region" description="Acidic residues" evidence="4">
    <location>
        <begin position="802"/>
        <end position="825"/>
    </location>
</feature>
<feature type="modified residue" description="Phosphoserine" evidence="5">
    <location>
        <position position="118"/>
    </location>
</feature>
<feature type="modified residue" description="Phosphoserine" evidence="5">
    <location>
        <position position="393"/>
    </location>
</feature>
<feature type="modified residue" description="Phosphoserine" evidence="5">
    <location>
        <position position="683"/>
    </location>
</feature>
<feature type="modified residue" description="Phosphoserine" evidence="5">
    <location>
        <position position="696"/>
    </location>
</feature>
<feature type="splice variant" id="VSP_028340" description="In isoform 2." evidence="9">
    <location>
        <begin position="1"/>
        <end position="52"/>
    </location>
</feature>
<feature type="mutagenesis site" description="No change in the inhibition of calcium release and no change in phosphorylation efficiency; when associated with A-393 and A-683." evidence="6">
    <original>S</original>
    <variation>A</variation>
    <location>
        <position position="118"/>
    </location>
</feature>
<feature type="mutagenesis site" description="Drastic decrease of PRKG1 binding; when associated with A-176." evidence="8">
    <original>R</original>
    <variation>A</variation>
    <location>
        <position position="172"/>
    </location>
</feature>
<feature type="mutagenesis site" description="Drastic decrease of PRKG1 binding; when associated with A-172. Disruption of PRKG1 interaction; when associated with A-177." evidence="8">
    <original>R</original>
    <variation>A</variation>
    <location>
        <position position="176"/>
    </location>
</feature>
<feature type="mutagenesis site" description="Drastic decrease of PRKG1 binding; when associated with A-176." evidence="8">
    <original>R</original>
    <variation>A</variation>
    <location>
        <position position="177"/>
    </location>
</feature>
<feature type="mutagenesis site" description="Reduced interaction with PRKG1; when associated with A-180." evidence="8">
    <original>R</original>
    <variation>A</variation>
    <location>
        <position position="179"/>
    </location>
</feature>
<feature type="mutagenesis site" description="Reduced interaction with PRKG1; when associated with A-179. Reduced interaction with PRKG1; when associated with A-182." evidence="8">
    <original>K</original>
    <variation>A</variation>
    <location>
        <position position="180"/>
    </location>
</feature>
<feature type="mutagenesis site" description="Reduced interaction with PRKG1; when associated with A-180." evidence="8">
    <original>R</original>
    <variation>A</variation>
    <location>
        <position position="182"/>
    </location>
</feature>
<feature type="mutagenesis site" description="No change in the inhibition of calcium release and no change in phosphorylation efficiency; when associated with A-118 and A-683. No more calcium release inhibition; when associated with A-118; A-683 and A-696." evidence="6">
    <original>S</original>
    <variation>A</variation>
    <location>
        <position position="393"/>
    </location>
</feature>
<feature type="mutagenesis site" description="No change in the inhibition of calcium release and no change in phosphorylation efficiency; when associated with A-118 and A-393. No more calcium release inhibition; when associated with A-118; A-393 and A-696." evidence="6">
    <original>S</original>
    <variation>A</variation>
    <location>
        <position position="683"/>
    </location>
</feature>
<feature type="mutagenesis site" description="Drastic phosphorylation decrease by PRKG1 and no more inhibition of calcium release. No calcium release inhibition; when associated with A-118; A-393 and A-683." evidence="6">
    <original>S</original>
    <variation>A</variation>
    <location>
        <position position="696"/>
    </location>
</feature>
<keyword id="KW-0025">Alternative splicing</keyword>
<keyword id="KW-0175">Coiled coil</keyword>
<keyword id="KW-0963">Cytoplasm</keyword>
<keyword id="KW-0472">Membrane</keyword>
<keyword id="KW-0597">Phosphoprotein</keyword>
<keyword id="KW-1185">Reference proteome</keyword>
<keyword id="KW-0703">Sarcoplasmic reticulum</keyword>
<keyword id="KW-0812">Transmembrane</keyword>
<keyword id="KW-1133">Transmembrane helix</keyword>
<organism>
    <name type="scientific">Bos taurus</name>
    <name type="common">Bovine</name>
    <dbReference type="NCBI Taxonomy" id="9913"/>
    <lineage>
        <taxon>Eukaryota</taxon>
        <taxon>Metazoa</taxon>
        <taxon>Chordata</taxon>
        <taxon>Craniata</taxon>
        <taxon>Vertebrata</taxon>
        <taxon>Euteleostomi</taxon>
        <taxon>Mammalia</taxon>
        <taxon>Eutheria</taxon>
        <taxon>Laurasiatheria</taxon>
        <taxon>Artiodactyla</taxon>
        <taxon>Ruminantia</taxon>
        <taxon>Pecora</taxon>
        <taxon>Bovidae</taxon>
        <taxon>Bovinae</taxon>
        <taxon>Bos</taxon>
    </lineage>
</organism>
<sequence length="911" mass="98375">MVKAPQSEERLAGGGKGNNSVLACGAQASWSIFGADAAEVPGTRSHSRQEAAMPHIPEDEEPPGEPQAAQSPAGQDPATTGISCSPPTIILTGDASSPEGETDKNPVNRAHSPHRRLSHRHLKVSTASLTSVDPAGHVIDLVNDQLPDISISEEDKKKNLALLEEAKLVSERFLTRRGRKSRSSPGESSPAVSPNLSPGASPASSQSNSLTVPTPPGLDVCSGPPSPLPGAPPQKGDEAEVPSPHLGESNVLKGLADRKQNDQRTLSQGRLTARSPTVEKSKEITIEQKENFDPLQRPEAIPKGPASGPGSGGKMALNSPQPGPVESELGKPLAKTAKEGNPLPRGPTQGSGGVAPQASQGKSTVGEPAGSKVGSKAELWPPTSRPPLLRGVSWDSGPEEPGPRLQKVLAKLPLAEEEKRFTGKAGSKLAKAPGLKDFQIQVQPVRMQKLTKLREEHILLRNQNLVGLKLPELSEAAEQEKGHPSELSSAIEEEESKGGLDVMPNISDVLLRKLRVHKSLPGSAPPLTEKEVENVFVQLSLAFRNDSYTLESRINQAERERNLTEENTEKELENFKASITSSASLWHHCEHRETYQKLLEDIAVLHRLAARLSSRAEMVGAVRQEKRMSKATEVMMQYVENLKRTYEKDHAELMEFKKLANQNSSRSCGPSEDGVPRTARSMSLSLGKNMPRRRVSVAVVPKFNILNLPGQSPSSSPIPSLPALSESSNGKGNPPVSSALPALLENGKTNGDPDCEASASVPTPSCLEGISQEAKARMEEEAYNKGYQEGLKKTKELQGLREEEEEQKSESPEEPEEVAETEEEEKEQRSSKLEELVHFLQVMYPKLCQHWQVIWMMAAAMLVLTVVLGLYGSHNSCVEQADGSLGKSTCSAAQRDSWWSSGLQHEQPTEQ</sequence>
<reference key="1">
    <citation type="journal article" date="2000" name="Nature">
        <title>Regulation of intracellular calcium by a signalling complex of IRAG, IP3 receptor and cGMP kinase Ibeta.</title>
        <authorList>
            <person name="Schlossmann J."/>
            <person name="Ammendola A."/>
            <person name="Ashman K."/>
            <person name="Zong X."/>
            <person name="Huber A."/>
            <person name="Neubauer G."/>
            <person name="Wang G.-X."/>
            <person name="Allescher H.-D."/>
            <person name="Korth M."/>
            <person name="Wilm M."/>
            <person name="Hofmann F."/>
            <person name="Ruth P."/>
        </authorList>
    </citation>
    <scope>NUCLEOTIDE SEQUENCE [MRNA] (ISOFORMS 1 AND 2)</scope>
    <scope>FUNCTION</scope>
    <scope>PHOSPHORYLATION AT SER-118; SER-393; SER-683 AND SER-696</scope>
    <scope>IDENTIFICATION BY MASS SPECTROMETRY</scope>
    <scope>TISSUE SPECIFICITY</scope>
    <scope>SUBCELLULAR LOCATION</scope>
    <scope>INTERACTION WITH PRKG1 AND ITPR1</scope>
</reference>
<reference key="2">
    <citation type="journal article" date="2001" name="J. Biol. Chem.">
        <title>Molecular determinants of the interaction between the inositol 1,4,5-trisphosphate receptor-associated cGMP kinase substrate (IRAG) and cGMP kinase Ibeta.</title>
        <authorList>
            <person name="Ammendola A."/>
            <person name="Geiselhoeringer A."/>
            <person name="Hofmann F."/>
            <person name="Schlossmann J."/>
        </authorList>
    </citation>
    <scope>INTERACTION WITH PRKG1 AND ITPR1</scope>
    <scope>REGION</scope>
    <scope>MUTAGENESIS OF SER-118; SER-393; SER-683 AND SER-696</scope>
</reference>
<reference key="3">
    <citation type="journal article" date="2003" name="Biochem. Biophys. Res. Commun.">
        <title>Association of phospholamban with a cGMP kinase signaling complex.</title>
        <authorList>
            <person name="Koller A."/>
            <person name="Schlossmann J."/>
            <person name="Ashman K."/>
            <person name="Uttenweiler-Joseph S."/>
            <person name="Ruth P."/>
            <person name="Hofmann F."/>
        </authorList>
    </citation>
    <scope>SUBUNIT</scope>
    <scope>IDENTIFICATION BY MASS SPECTROMETRY</scope>
</reference>
<reference key="4">
    <citation type="journal article" date="2005" name="J. Biol. Chem.">
        <title>Identification of the interface between cGMP-dependent protein kinase Ibeta and its interaction partners TFII-I and IRAG reveals a common interaction motif.</title>
        <authorList>
            <person name="Casteel D.E."/>
            <person name="Boss G.R."/>
            <person name="Pilz R.B."/>
        </authorList>
    </citation>
    <scope>FUNCTION</scope>
    <scope>INTERACTION WITH PRKG1</scope>
    <scope>MUTAGENESIS OF ARG-172; ARG-176; ARG-177; ARG-179; LYS-180 AND ARG-182</scope>
</reference>
<comment type="function">
    <text evidence="2 5 8">Plays a role as NO/PRKG1-dependent regulator of IP3-induced calcium release; its phosphorylation by PRKG1 inhibits bradykinin and IP3-induced calcium release from intracellular stores. Recruits PRKG1 to the endoplasmic reticulum and may mediate the assembly of PRKG1 and ITPR1 in a macrocomplex. Involved in PRKG1 signaling cascade leading to inhibition of platelet activation and aggregation. Also mediates NO-dependent inhibition of calcium signaling in gastrointestinal smooth muscle contributing to NO-dependent relaxation. Plays a role in the regulation of cellular excitability by regulating the hyperpolarization-activated cyclic nucleotide-gated HCN4 channel activity (By similarity).</text>
</comment>
<comment type="subunit">
    <text evidence="2 5 6 7 8">Interacts with PRKG1/cGKI-beta and ITPR1/IP3R type I. Part of cGMP kinase signaling complex at least composed of ACTA2/alpha-actin, CNN1/calponin H1, PLN/phospholamban, PRKG1 and ITPR1. Interacts with HCN4; regulates HCN4 channel activity (By similarity).</text>
</comment>
<comment type="subcellular location">
    <subcellularLocation>
        <location evidence="1">Sarcoplasmic reticulum</location>
    </subcellularLocation>
    <subcellularLocation>
        <location evidence="5">Cytoplasm</location>
        <location evidence="5">Perinuclear region</location>
    </subcellularLocation>
    <subcellularLocation>
        <location evidence="10">Membrane</location>
        <topology evidence="10">Single-pass membrane protein</topology>
    </subcellularLocation>
</comment>
<comment type="alternative products">
    <event type="alternative splicing"/>
    <isoform>
        <id>Q9N1F0-1</id>
        <name>1</name>
        <name>IRAGa</name>
        <sequence type="displayed"/>
    </isoform>
    <isoform>
        <id>Q9N1F0-2</id>
        <name>2</name>
        <name>IRAGb</name>
        <sequence type="described" ref="VSP_028340"/>
    </isoform>
</comment>
<comment type="tissue specificity">
    <text evidence="5">Highly expressed in trachea, aorta and uterus.</text>
</comment>
<comment type="PTM">
    <text evidence="5">Phosphorylated by PRKG1/cGKI-beta. Phosphorylation at Ser-696 is necessary for PRKG1-induced calcium release in the cytosol.</text>
</comment>
<name>IRAG1_BOVIN</name>
<gene>
    <name type="primary">IRAG1</name>
    <name type="synonym">IRAG</name>
    <name type="synonym">MRVI1</name>
</gene>
<proteinExistence type="evidence at protein level"/>
<protein>
    <recommendedName>
        <fullName evidence="10">Inositol 1,4,5-triphosphate receptor associated 1</fullName>
    </recommendedName>
    <alternativeName>
        <fullName>Inositol 1,4,5-trisphosphate receptor-associated cGMP kinase substrate</fullName>
    </alternativeName>
    <alternativeName>
        <fullName>JAW1-related protein MRVI1</fullName>
    </alternativeName>
    <alternativeName>
        <fullName>Protein MRVI1</fullName>
    </alternativeName>
</protein>
<accession>Q9N1F0</accession>
<accession>Q9N1E9</accession>